<sequence>MKLSDFIKTEDFKKEKHVPVIEAPEKVKKDEKVQIVVTVGKEIPHPNTTEHHIRWIKVFFQPDGDPYVYEVGRYEFNAHGESVQGPNIGAVYTEPTVTTVVKLNRSGTIIALSYCNIHGLWESSQKITVEE</sequence>
<proteinExistence type="evidence at protein level"/>
<comment type="function">
    <text evidence="1">Uses electrons from reduced NADP, by way of rubredoxin and an oxidoreductase, to catalyze the reduction of superoxide to hydrogen peroxide.</text>
</comment>
<comment type="catalytic activity">
    <reaction evidence="2">
        <text>reduced [rubredoxin] + superoxide + 2 H(+) = oxidized [rubredoxin] + H2O2</text>
        <dbReference type="Rhea" id="RHEA:21324"/>
        <dbReference type="Rhea" id="RHEA-COMP:10302"/>
        <dbReference type="Rhea" id="RHEA-COMP:10303"/>
        <dbReference type="ChEBI" id="CHEBI:15378"/>
        <dbReference type="ChEBI" id="CHEBI:16240"/>
        <dbReference type="ChEBI" id="CHEBI:18421"/>
        <dbReference type="ChEBI" id="CHEBI:29033"/>
        <dbReference type="ChEBI" id="CHEBI:29034"/>
        <dbReference type="EC" id="1.15.1.2"/>
    </reaction>
</comment>
<comment type="cofactor">
    <cofactor evidence="1">
        <name>Fe cation</name>
        <dbReference type="ChEBI" id="CHEBI:24875"/>
    </cofactor>
</comment>
<comment type="similarity">
    <text evidence="3">Belongs to the desulfoferrodoxin family.</text>
</comment>
<name>SOR_THEMA</name>
<organism>
    <name type="scientific">Thermotoga maritima (strain ATCC 43589 / DSM 3109 / JCM 10099 / NBRC 100826 / MSB8)</name>
    <dbReference type="NCBI Taxonomy" id="243274"/>
    <lineage>
        <taxon>Bacteria</taxon>
        <taxon>Thermotogati</taxon>
        <taxon>Thermotogota</taxon>
        <taxon>Thermotogae</taxon>
        <taxon>Thermotogales</taxon>
        <taxon>Thermotogaceae</taxon>
        <taxon>Thermotoga</taxon>
    </lineage>
</organism>
<protein>
    <recommendedName>
        <fullName>Putative superoxide reductase</fullName>
        <shortName>SOR</shortName>
        <ecNumber>1.15.1.2</ecNumber>
    </recommendedName>
</protein>
<keyword id="KW-0002">3D-structure</keyword>
<keyword id="KW-0249">Electron transport</keyword>
<keyword id="KW-0408">Iron</keyword>
<keyword id="KW-0479">Metal-binding</keyword>
<keyword id="KW-0560">Oxidoreductase</keyword>
<keyword id="KW-1185">Reference proteome</keyword>
<keyword id="KW-0813">Transport</keyword>
<feature type="chain" id="PRO_0000140876" description="Putative superoxide reductase">
    <location>
        <begin position="1"/>
        <end position="131"/>
    </location>
</feature>
<feature type="binding site" evidence="1">
    <location>
        <position position="15"/>
    </location>
    <ligand>
        <name>Fe cation</name>
        <dbReference type="ChEBI" id="CHEBI:24875"/>
    </ligand>
</feature>
<feature type="binding site" evidence="1">
    <location>
        <position position="17"/>
    </location>
    <ligand>
        <name>Fe cation</name>
        <dbReference type="ChEBI" id="CHEBI:24875"/>
    </ligand>
</feature>
<feature type="binding site" evidence="1">
    <location>
        <position position="45"/>
    </location>
    <ligand>
        <name>Fe cation</name>
        <dbReference type="ChEBI" id="CHEBI:24875"/>
    </ligand>
</feature>
<feature type="binding site" evidence="1">
    <location>
        <position position="51"/>
    </location>
    <ligand>
        <name>Fe cation</name>
        <dbReference type="ChEBI" id="CHEBI:24875"/>
    </ligand>
</feature>
<feature type="binding site" evidence="1">
    <location>
        <position position="115"/>
    </location>
    <ligand>
        <name>Fe cation</name>
        <dbReference type="ChEBI" id="CHEBI:24875"/>
    </ligand>
</feature>
<feature type="binding site" evidence="1">
    <location>
        <position position="118"/>
    </location>
    <ligand>
        <name>Fe cation</name>
        <dbReference type="ChEBI" id="CHEBI:24875"/>
    </ligand>
</feature>
<feature type="helix" evidence="4">
    <location>
        <begin position="3"/>
        <end position="6"/>
    </location>
</feature>
<feature type="turn" evidence="4">
    <location>
        <begin position="12"/>
        <end position="14"/>
    </location>
</feature>
<feature type="strand" evidence="4">
    <location>
        <begin position="19"/>
        <end position="22"/>
    </location>
</feature>
<feature type="strand" evidence="4">
    <location>
        <begin position="25"/>
        <end position="27"/>
    </location>
</feature>
<feature type="strand" evidence="4">
    <location>
        <begin position="32"/>
        <end position="43"/>
    </location>
</feature>
<feature type="strand" evidence="4">
    <location>
        <begin position="48"/>
        <end position="51"/>
    </location>
</feature>
<feature type="strand" evidence="4">
    <location>
        <begin position="53"/>
        <end position="62"/>
    </location>
</feature>
<feature type="strand" evidence="4">
    <location>
        <begin position="69"/>
        <end position="75"/>
    </location>
</feature>
<feature type="strand" evidence="4">
    <location>
        <begin position="95"/>
        <end position="102"/>
    </location>
</feature>
<feature type="strand" evidence="4">
    <location>
        <begin position="107"/>
        <end position="115"/>
    </location>
</feature>
<feature type="turn" evidence="4">
    <location>
        <begin position="116"/>
        <end position="118"/>
    </location>
</feature>
<feature type="strand" evidence="4">
    <location>
        <begin position="119"/>
        <end position="129"/>
    </location>
</feature>
<gene>
    <name type="ordered locus">TM_0658</name>
</gene>
<reference key="1">
    <citation type="journal article" date="1999" name="Nature">
        <title>Evidence for lateral gene transfer between Archaea and Bacteria from genome sequence of Thermotoga maritima.</title>
        <authorList>
            <person name="Nelson K.E."/>
            <person name="Clayton R.A."/>
            <person name="Gill S.R."/>
            <person name="Gwinn M.L."/>
            <person name="Dodson R.J."/>
            <person name="Haft D.H."/>
            <person name="Hickey E.K."/>
            <person name="Peterson J.D."/>
            <person name="Nelson W.C."/>
            <person name="Ketchum K.A."/>
            <person name="McDonald L.A."/>
            <person name="Utterback T.R."/>
            <person name="Malek J.A."/>
            <person name="Linher K.D."/>
            <person name="Garrett M.M."/>
            <person name="Stewart A.M."/>
            <person name="Cotton M.D."/>
            <person name="Pratt M.S."/>
            <person name="Phillips C.A."/>
            <person name="Richardson D.L."/>
            <person name="Heidelberg J.F."/>
            <person name="Sutton G.G."/>
            <person name="Fleischmann R.D."/>
            <person name="Eisen J.A."/>
            <person name="White O."/>
            <person name="Salzberg S.L."/>
            <person name="Smith H.O."/>
            <person name="Venter J.C."/>
            <person name="Fraser C.M."/>
        </authorList>
    </citation>
    <scope>NUCLEOTIDE SEQUENCE [LARGE SCALE GENOMIC DNA]</scope>
    <source>
        <strain>ATCC 43589 / DSM 3109 / JCM 10099 / NBRC 100826 / MSB8</strain>
    </source>
</reference>
<dbReference type="EC" id="1.15.1.2"/>
<dbReference type="EMBL" id="AE000512">
    <property type="protein sequence ID" value="AAD35742.1"/>
    <property type="molecule type" value="Genomic_DNA"/>
</dbReference>
<dbReference type="PIR" id="G72348">
    <property type="entry name" value="G72348"/>
</dbReference>
<dbReference type="RefSeq" id="NP_228467.1">
    <property type="nucleotide sequence ID" value="NC_000853.1"/>
</dbReference>
<dbReference type="RefSeq" id="WP_004081116.1">
    <property type="nucleotide sequence ID" value="NZ_CP011107.1"/>
</dbReference>
<dbReference type="PDB" id="2AMU">
    <property type="method" value="X-ray"/>
    <property type="resolution" value="2.00 A"/>
    <property type="chains" value="A=1-131"/>
</dbReference>
<dbReference type="PDB" id="3QZB">
    <property type="method" value="X-ray"/>
    <property type="resolution" value="1.10 A"/>
    <property type="chains" value="A=1-131"/>
</dbReference>
<dbReference type="PDBsum" id="2AMU"/>
<dbReference type="PDBsum" id="3QZB"/>
<dbReference type="SMR" id="Q9WZC6"/>
<dbReference type="STRING" id="243274.TM_0658"/>
<dbReference type="PaxDb" id="243274-THEMA_01375"/>
<dbReference type="EnsemblBacteria" id="AAD35742">
    <property type="protein sequence ID" value="AAD35742"/>
    <property type="gene ID" value="TM_0658"/>
</dbReference>
<dbReference type="KEGG" id="tma:TM0658"/>
<dbReference type="KEGG" id="tmi:THEMA_01375"/>
<dbReference type="KEGG" id="tmm:Tmari_0658"/>
<dbReference type="KEGG" id="tmw:THMA_0673"/>
<dbReference type="eggNOG" id="COG2033">
    <property type="taxonomic scope" value="Bacteria"/>
</dbReference>
<dbReference type="InParanoid" id="Q9WZC6"/>
<dbReference type="OrthoDB" id="9814936at2"/>
<dbReference type="BRENDA" id="1.15.1.2">
    <property type="organism ID" value="6331"/>
</dbReference>
<dbReference type="EvolutionaryTrace" id="Q9WZC6"/>
<dbReference type="Proteomes" id="UP000008183">
    <property type="component" value="Chromosome"/>
</dbReference>
<dbReference type="GO" id="GO:0005506">
    <property type="term" value="F:iron ion binding"/>
    <property type="evidence" value="ECO:0007669"/>
    <property type="project" value="InterPro"/>
</dbReference>
<dbReference type="GO" id="GO:0050605">
    <property type="term" value="F:superoxide reductase activity"/>
    <property type="evidence" value="ECO:0007669"/>
    <property type="project" value="UniProtKB-EC"/>
</dbReference>
<dbReference type="CDD" id="cd03172">
    <property type="entry name" value="SORL_classII"/>
    <property type="match status" value="1"/>
</dbReference>
<dbReference type="Gene3D" id="2.60.40.730">
    <property type="entry name" value="SOR catalytic domain"/>
    <property type="match status" value="1"/>
</dbReference>
<dbReference type="InterPro" id="IPR002742">
    <property type="entry name" value="Desulfoferrodoxin_Fe-bd_dom"/>
</dbReference>
<dbReference type="InterPro" id="IPR036073">
    <property type="entry name" value="Desulfoferrodoxin_Fe-bd_dom_sf"/>
</dbReference>
<dbReference type="InterPro" id="IPR051233">
    <property type="entry name" value="Desulfoferrodoxin_SOR"/>
</dbReference>
<dbReference type="NCBIfam" id="TIGR00332">
    <property type="entry name" value="neela_ferrous"/>
    <property type="match status" value="1"/>
</dbReference>
<dbReference type="PANTHER" id="PTHR36541">
    <property type="entry name" value="SUPEROXIDE REDUCTASE-RELATED"/>
    <property type="match status" value="1"/>
</dbReference>
<dbReference type="PANTHER" id="PTHR36541:SF1">
    <property type="entry name" value="SUPEROXIDE REDUCTASE-RELATED"/>
    <property type="match status" value="1"/>
</dbReference>
<dbReference type="Pfam" id="PF01880">
    <property type="entry name" value="Desulfoferrodox"/>
    <property type="match status" value="1"/>
</dbReference>
<dbReference type="SUPFAM" id="SSF49367">
    <property type="entry name" value="Superoxide reductase-like"/>
    <property type="match status" value="1"/>
</dbReference>
<evidence type="ECO:0000250" key="1"/>
<evidence type="ECO:0000250" key="2">
    <source>
        <dbReference type="UniProtKB" id="P82385"/>
    </source>
</evidence>
<evidence type="ECO:0000305" key="3"/>
<evidence type="ECO:0007829" key="4">
    <source>
        <dbReference type="PDB" id="3QZB"/>
    </source>
</evidence>
<accession>Q9WZC6</accession>